<accession>A6H603</accession>
<accession>Q3TRC9</accession>
<accession>Q8BS99</accession>
<protein>
    <recommendedName>
        <fullName>NACHT domain- and WD repeat-containing protein 1</fullName>
    </recommendedName>
</protein>
<organism>
    <name type="scientific">Mus musculus</name>
    <name type="common">Mouse</name>
    <dbReference type="NCBI Taxonomy" id="10090"/>
    <lineage>
        <taxon>Eukaryota</taxon>
        <taxon>Metazoa</taxon>
        <taxon>Chordata</taxon>
        <taxon>Craniata</taxon>
        <taxon>Vertebrata</taxon>
        <taxon>Euteleostomi</taxon>
        <taxon>Mammalia</taxon>
        <taxon>Eutheria</taxon>
        <taxon>Euarchontoglires</taxon>
        <taxon>Glires</taxon>
        <taxon>Rodentia</taxon>
        <taxon>Myomorpha</taxon>
        <taxon>Muroidea</taxon>
        <taxon>Muridae</taxon>
        <taxon>Murinae</taxon>
        <taxon>Mus</taxon>
        <taxon>Mus</taxon>
    </lineage>
</organism>
<feature type="chain" id="PRO_0000308255" description="NACHT domain- and WD repeat-containing protein 1">
    <location>
        <begin position="1"/>
        <end position="1563"/>
    </location>
</feature>
<feature type="repeat" description="WD 1">
    <location>
        <begin position="274"/>
        <end position="314"/>
    </location>
</feature>
<feature type="domain" description="NACHT">
    <location>
        <begin position="336"/>
        <end position="666"/>
    </location>
</feature>
<feature type="repeat" description="WD 2">
    <location>
        <begin position="866"/>
        <end position="905"/>
    </location>
</feature>
<feature type="repeat" description="WD 3">
    <location>
        <begin position="908"/>
        <end position="947"/>
    </location>
</feature>
<feature type="repeat" description="WD 4">
    <location>
        <begin position="954"/>
        <end position="994"/>
    </location>
</feature>
<feature type="repeat" description="WD 5">
    <location>
        <begin position="998"/>
        <end position="1037"/>
    </location>
</feature>
<feature type="repeat" description="WD 6">
    <location>
        <begin position="1044"/>
        <end position="1082"/>
    </location>
</feature>
<feature type="repeat" description="WD 7">
    <location>
        <begin position="1126"/>
        <end position="1165"/>
    </location>
</feature>
<feature type="repeat" description="WD 8">
    <location>
        <begin position="1168"/>
        <end position="1207"/>
    </location>
</feature>
<feature type="repeat" description="WD 9">
    <location>
        <begin position="1212"/>
        <end position="1251"/>
    </location>
</feature>
<feature type="repeat" description="WD 10">
    <location>
        <begin position="1253"/>
        <end position="1292"/>
    </location>
</feature>
<feature type="repeat" description="WD 11">
    <location>
        <begin position="1346"/>
        <end position="1385"/>
    </location>
</feature>
<feature type="repeat" description="WD 12">
    <location>
        <begin position="1386"/>
        <end position="1425"/>
    </location>
</feature>
<feature type="repeat" description="WD 13">
    <location>
        <begin position="1431"/>
        <end position="1470"/>
    </location>
</feature>
<feature type="region of interest" description="Disordered" evidence="3">
    <location>
        <begin position="1534"/>
        <end position="1563"/>
    </location>
</feature>
<feature type="binding site" evidence="2">
    <location>
        <begin position="342"/>
        <end position="349"/>
    </location>
    <ligand>
        <name>ATP</name>
        <dbReference type="ChEBI" id="CHEBI:30616"/>
    </ligand>
</feature>
<feature type="splice variant" id="VSP_028942" description="In isoform 3." evidence="5">
    <location>
        <begin position="1"/>
        <end position="207"/>
    </location>
</feature>
<feature type="splice variant" id="VSP_028943" description="In isoform 4." evidence="5">
    <original>A</original>
    <variation>V</variation>
    <location>
        <position position="911"/>
    </location>
</feature>
<feature type="splice variant" id="VSP_028944" description="In isoform 4." evidence="5">
    <location>
        <begin position="912"/>
        <end position="1563"/>
    </location>
</feature>
<feature type="splice variant" id="VSP_028945" description="In isoform 2 and isoform 3." evidence="4 5">
    <original>NSCCRG</original>
    <variation>VGGLDN</variation>
    <location>
        <begin position="1430"/>
        <end position="1435"/>
    </location>
</feature>
<feature type="splice variant" id="VSP_028946" description="In isoform 2 and isoform 3." evidence="4 5">
    <location>
        <begin position="1436"/>
        <end position="1563"/>
    </location>
</feature>
<feature type="sequence conflict" description="In Ref. 3; AAI45704." evidence="6" ref="3">
    <original>V</original>
    <variation>A</variation>
    <location>
        <position position="213"/>
    </location>
</feature>
<feature type="sequence conflict" description="In Ref. 1; BAC28860." evidence="6" ref="1">
    <original>D</original>
    <variation>G</variation>
    <location>
        <position position="218"/>
    </location>
</feature>
<feature type="sequence conflict" description="In Ref. 3; AAI45704." evidence="6" ref="3">
    <original>Q</original>
    <variation>R</variation>
    <location>
        <position position="326"/>
    </location>
</feature>
<feature type="sequence conflict" description="In Ref. 1; BAE37101." evidence="6" ref="1">
    <original>A</original>
    <variation>T</variation>
    <location>
        <position position="356"/>
    </location>
</feature>
<feature type="sequence conflict" description="In Ref. 3; AAI45704." evidence="6" ref="3">
    <original>A</original>
    <variation>V</variation>
    <location>
        <position position="410"/>
    </location>
</feature>
<evidence type="ECO:0000250" key="1">
    <source>
        <dbReference type="UniProtKB" id="Q149M9"/>
    </source>
</evidence>
<evidence type="ECO:0000255" key="2"/>
<evidence type="ECO:0000256" key="3">
    <source>
        <dbReference type="SAM" id="MobiDB-lite"/>
    </source>
</evidence>
<evidence type="ECO:0000303" key="4">
    <source>
    </source>
</evidence>
<evidence type="ECO:0000303" key="5">
    <source>
    </source>
</evidence>
<evidence type="ECO:0000305" key="6"/>
<proteinExistence type="evidence at transcript level"/>
<keyword id="KW-0025">Alternative splicing</keyword>
<keyword id="KW-0067">ATP-binding</keyword>
<keyword id="KW-0963">Cytoplasm</keyword>
<keyword id="KW-0547">Nucleotide-binding</keyword>
<keyword id="KW-1185">Reference proteome</keyword>
<keyword id="KW-0677">Repeat</keyword>
<keyword id="KW-0853">WD repeat</keyword>
<dbReference type="EMBL" id="AK034868">
    <property type="protein sequence ID" value="BAC28860.1"/>
    <property type="molecule type" value="mRNA"/>
</dbReference>
<dbReference type="EMBL" id="AK162888">
    <property type="protein sequence ID" value="BAE37101.1"/>
    <property type="status" value="ALT_FRAME"/>
    <property type="molecule type" value="mRNA"/>
</dbReference>
<dbReference type="EMBL" id="AC171917">
    <property type="status" value="NOT_ANNOTATED_CDS"/>
    <property type="molecule type" value="Genomic_DNA"/>
</dbReference>
<dbReference type="EMBL" id="BC145703">
    <property type="protein sequence ID" value="AAI45704.1"/>
    <property type="status" value="ALT_INIT"/>
    <property type="molecule type" value="mRNA"/>
</dbReference>
<dbReference type="RefSeq" id="XP_006531150.1">
    <molecule id="A6H603-1"/>
    <property type="nucleotide sequence ID" value="XM_006531087.5"/>
</dbReference>
<dbReference type="RefSeq" id="XP_036009985.1">
    <molecule id="A6H603-4"/>
    <property type="nucleotide sequence ID" value="XM_036154092.1"/>
</dbReference>
<dbReference type="FunCoup" id="A6H603">
    <property type="interactions" value="592"/>
</dbReference>
<dbReference type="STRING" id="10090.ENSMUSP00000124804"/>
<dbReference type="iPTMnet" id="A6H603"/>
<dbReference type="PhosphoSitePlus" id="A6H603"/>
<dbReference type="PaxDb" id="10090-ENSMUSP00000124804"/>
<dbReference type="PeptideAtlas" id="A6H603"/>
<dbReference type="ProteomicsDB" id="293787">
    <molecule id="A6H603-1"/>
</dbReference>
<dbReference type="ProteomicsDB" id="293788">
    <molecule id="A6H603-2"/>
</dbReference>
<dbReference type="ProteomicsDB" id="293789">
    <molecule id="A6H603-3"/>
</dbReference>
<dbReference type="ProteomicsDB" id="293790">
    <molecule id="A6H603-4"/>
</dbReference>
<dbReference type="Antibodypedia" id="69163">
    <property type="antibodies" value="9 antibodies from 7 providers"/>
</dbReference>
<dbReference type="Ensembl" id="ENSMUST00000093427.11">
    <molecule id="A6H603-1"/>
    <property type="protein sequence ID" value="ENSMUSP00000091135.5"/>
    <property type="gene ID" value="ENSMUSG00000048148.19"/>
</dbReference>
<dbReference type="GeneID" id="319555"/>
<dbReference type="UCSC" id="uc012gfx.1">
    <molecule id="A6H603-3"/>
    <property type="organism name" value="mouse"/>
</dbReference>
<dbReference type="AGR" id="MGI:2442268"/>
<dbReference type="CTD" id="284434"/>
<dbReference type="MGI" id="MGI:2442268">
    <property type="gene designation" value="Nwd1"/>
</dbReference>
<dbReference type="VEuPathDB" id="HostDB:ENSMUSG00000048148"/>
<dbReference type="eggNOG" id="KOG0266">
    <property type="taxonomic scope" value="Eukaryota"/>
</dbReference>
<dbReference type="eggNOG" id="KOG3602">
    <property type="taxonomic scope" value="Eukaryota"/>
</dbReference>
<dbReference type="GeneTree" id="ENSGT00940000161635"/>
<dbReference type="InParanoid" id="A6H603"/>
<dbReference type="PhylomeDB" id="A6H603"/>
<dbReference type="BioGRID-ORCS" id="319555">
    <property type="hits" value="7 hits in 76 CRISPR screens"/>
</dbReference>
<dbReference type="ChiTaRS" id="Nwd1">
    <property type="organism name" value="mouse"/>
</dbReference>
<dbReference type="PRO" id="PR:A6H603"/>
<dbReference type="Proteomes" id="UP000000589">
    <property type="component" value="Chromosome 8"/>
</dbReference>
<dbReference type="RNAct" id="A6H603">
    <property type="molecule type" value="protein"/>
</dbReference>
<dbReference type="Bgee" id="ENSMUSG00000048148">
    <property type="expression patterns" value="Expressed in olfactory epithelium and 75 other cell types or tissues"/>
</dbReference>
<dbReference type="ExpressionAtlas" id="A6H603">
    <property type="expression patterns" value="baseline and differential"/>
</dbReference>
<dbReference type="GO" id="GO:0005829">
    <property type="term" value="C:cytosol"/>
    <property type="evidence" value="ECO:0000250"/>
    <property type="project" value="UniProtKB"/>
</dbReference>
<dbReference type="GO" id="GO:0005730">
    <property type="term" value="C:nucleolus"/>
    <property type="evidence" value="ECO:0007669"/>
    <property type="project" value="Ensembl"/>
</dbReference>
<dbReference type="GO" id="GO:0005524">
    <property type="term" value="F:ATP binding"/>
    <property type="evidence" value="ECO:0007669"/>
    <property type="project" value="UniProtKB-KW"/>
</dbReference>
<dbReference type="GO" id="GO:0032088">
    <property type="term" value="P:negative regulation of NF-kappaB transcription factor activity"/>
    <property type="evidence" value="ECO:0000250"/>
    <property type="project" value="UniProtKB"/>
</dbReference>
<dbReference type="GO" id="GO:0010628">
    <property type="term" value="P:positive regulation of gene expression"/>
    <property type="evidence" value="ECO:0000250"/>
    <property type="project" value="UniProtKB"/>
</dbReference>
<dbReference type="FunFam" id="3.40.50.300:FF:001720">
    <property type="entry name" value="NACHT and WD repeat domain containing 1"/>
    <property type="match status" value="1"/>
</dbReference>
<dbReference type="Gene3D" id="3.40.50.300">
    <property type="entry name" value="P-loop containing nucleotide triphosphate hydrolases"/>
    <property type="match status" value="1"/>
</dbReference>
<dbReference type="Gene3D" id="2.130.10.10">
    <property type="entry name" value="YVTN repeat-like/Quinoprotein amine dehydrogenase"/>
    <property type="match status" value="3"/>
</dbReference>
<dbReference type="InterPro" id="IPR007111">
    <property type="entry name" value="NACHT_NTPase"/>
</dbReference>
<dbReference type="InterPro" id="IPR043365">
    <property type="entry name" value="NWD1"/>
</dbReference>
<dbReference type="InterPro" id="IPR027417">
    <property type="entry name" value="P-loop_NTPase"/>
</dbReference>
<dbReference type="InterPro" id="IPR015943">
    <property type="entry name" value="WD40/YVTN_repeat-like_dom_sf"/>
</dbReference>
<dbReference type="InterPro" id="IPR019775">
    <property type="entry name" value="WD40_repeat_CS"/>
</dbReference>
<dbReference type="InterPro" id="IPR036322">
    <property type="entry name" value="WD40_repeat_dom_sf"/>
</dbReference>
<dbReference type="InterPro" id="IPR001680">
    <property type="entry name" value="WD40_rpt"/>
</dbReference>
<dbReference type="PANTHER" id="PTHR45013">
    <property type="entry name" value="NACHT DOMAIN- AND WD REPEAT-CONTAINING PROTEIN 1"/>
    <property type="match status" value="1"/>
</dbReference>
<dbReference type="PANTHER" id="PTHR45013:SF1">
    <property type="entry name" value="NACHT DOMAIN- AND WD REPEAT-CONTAINING PROTEIN 1"/>
    <property type="match status" value="1"/>
</dbReference>
<dbReference type="Pfam" id="PF25469">
    <property type="entry name" value="HTH_NWD1"/>
    <property type="match status" value="1"/>
</dbReference>
<dbReference type="Pfam" id="PF05729">
    <property type="entry name" value="NACHT"/>
    <property type="match status" value="1"/>
</dbReference>
<dbReference type="Pfam" id="PF00400">
    <property type="entry name" value="WD40"/>
    <property type="match status" value="4"/>
</dbReference>
<dbReference type="SMART" id="SM00320">
    <property type="entry name" value="WD40"/>
    <property type="match status" value="10"/>
</dbReference>
<dbReference type="SUPFAM" id="SSF52540">
    <property type="entry name" value="P-loop containing nucleoside triphosphate hydrolases"/>
    <property type="match status" value="1"/>
</dbReference>
<dbReference type="SUPFAM" id="SSF69322">
    <property type="entry name" value="Tricorn protease domain 2"/>
    <property type="match status" value="1"/>
</dbReference>
<dbReference type="SUPFAM" id="SSF50978">
    <property type="entry name" value="WD40 repeat-like"/>
    <property type="match status" value="1"/>
</dbReference>
<dbReference type="PROSITE" id="PS00678">
    <property type="entry name" value="WD_REPEATS_1"/>
    <property type="match status" value="1"/>
</dbReference>
<dbReference type="PROSITE" id="PS50082">
    <property type="entry name" value="WD_REPEATS_2"/>
    <property type="match status" value="4"/>
</dbReference>
<dbReference type="PROSITE" id="PS50294">
    <property type="entry name" value="WD_REPEATS_REGION"/>
    <property type="match status" value="3"/>
</dbReference>
<name>NWD1_MOUSE</name>
<reference key="1">
    <citation type="journal article" date="2005" name="Science">
        <title>The transcriptional landscape of the mammalian genome.</title>
        <authorList>
            <person name="Carninci P."/>
            <person name="Kasukawa T."/>
            <person name="Katayama S."/>
            <person name="Gough J."/>
            <person name="Frith M.C."/>
            <person name="Maeda N."/>
            <person name="Oyama R."/>
            <person name="Ravasi T."/>
            <person name="Lenhard B."/>
            <person name="Wells C."/>
            <person name="Kodzius R."/>
            <person name="Shimokawa K."/>
            <person name="Bajic V.B."/>
            <person name="Brenner S.E."/>
            <person name="Batalov S."/>
            <person name="Forrest A.R."/>
            <person name="Zavolan M."/>
            <person name="Davis M.J."/>
            <person name="Wilming L.G."/>
            <person name="Aidinis V."/>
            <person name="Allen J.E."/>
            <person name="Ambesi-Impiombato A."/>
            <person name="Apweiler R."/>
            <person name="Aturaliya R.N."/>
            <person name="Bailey T.L."/>
            <person name="Bansal M."/>
            <person name="Baxter L."/>
            <person name="Beisel K.W."/>
            <person name="Bersano T."/>
            <person name="Bono H."/>
            <person name="Chalk A.M."/>
            <person name="Chiu K.P."/>
            <person name="Choudhary V."/>
            <person name="Christoffels A."/>
            <person name="Clutterbuck D.R."/>
            <person name="Crowe M.L."/>
            <person name="Dalla E."/>
            <person name="Dalrymple B.P."/>
            <person name="de Bono B."/>
            <person name="Della Gatta G."/>
            <person name="di Bernardo D."/>
            <person name="Down T."/>
            <person name="Engstrom P."/>
            <person name="Fagiolini M."/>
            <person name="Faulkner G."/>
            <person name="Fletcher C.F."/>
            <person name="Fukushima T."/>
            <person name="Furuno M."/>
            <person name="Futaki S."/>
            <person name="Gariboldi M."/>
            <person name="Georgii-Hemming P."/>
            <person name="Gingeras T.R."/>
            <person name="Gojobori T."/>
            <person name="Green R.E."/>
            <person name="Gustincich S."/>
            <person name="Harbers M."/>
            <person name="Hayashi Y."/>
            <person name="Hensch T.K."/>
            <person name="Hirokawa N."/>
            <person name="Hill D."/>
            <person name="Huminiecki L."/>
            <person name="Iacono M."/>
            <person name="Ikeo K."/>
            <person name="Iwama A."/>
            <person name="Ishikawa T."/>
            <person name="Jakt M."/>
            <person name="Kanapin A."/>
            <person name="Katoh M."/>
            <person name="Kawasawa Y."/>
            <person name="Kelso J."/>
            <person name="Kitamura H."/>
            <person name="Kitano H."/>
            <person name="Kollias G."/>
            <person name="Krishnan S.P."/>
            <person name="Kruger A."/>
            <person name="Kummerfeld S.K."/>
            <person name="Kurochkin I.V."/>
            <person name="Lareau L.F."/>
            <person name="Lazarevic D."/>
            <person name="Lipovich L."/>
            <person name="Liu J."/>
            <person name="Liuni S."/>
            <person name="McWilliam S."/>
            <person name="Madan Babu M."/>
            <person name="Madera M."/>
            <person name="Marchionni L."/>
            <person name="Matsuda H."/>
            <person name="Matsuzawa S."/>
            <person name="Miki H."/>
            <person name="Mignone F."/>
            <person name="Miyake S."/>
            <person name="Morris K."/>
            <person name="Mottagui-Tabar S."/>
            <person name="Mulder N."/>
            <person name="Nakano N."/>
            <person name="Nakauchi H."/>
            <person name="Ng P."/>
            <person name="Nilsson R."/>
            <person name="Nishiguchi S."/>
            <person name="Nishikawa S."/>
            <person name="Nori F."/>
            <person name="Ohara O."/>
            <person name="Okazaki Y."/>
            <person name="Orlando V."/>
            <person name="Pang K.C."/>
            <person name="Pavan W.J."/>
            <person name="Pavesi G."/>
            <person name="Pesole G."/>
            <person name="Petrovsky N."/>
            <person name="Piazza S."/>
            <person name="Reed J."/>
            <person name="Reid J.F."/>
            <person name="Ring B.Z."/>
            <person name="Ringwald M."/>
            <person name="Rost B."/>
            <person name="Ruan Y."/>
            <person name="Salzberg S.L."/>
            <person name="Sandelin A."/>
            <person name="Schneider C."/>
            <person name="Schoenbach C."/>
            <person name="Sekiguchi K."/>
            <person name="Semple C.A."/>
            <person name="Seno S."/>
            <person name="Sessa L."/>
            <person name="Sheng Y."/>
            <person name="Shibata Y."/>
            <person name="Shimada H."/>
            <person name="Shimada K."/>
            <person name="Silva D."/>
            <person name="Sinclair B."/>
            <person name="Sperling S."/>
            <person name="Stupka E."/>
            <person name="Sugiura K."/>
            <person name="Sultana R."/>
            <person name="Takenaka Y."/>
            <person name="Taki K."/>
            <person name="Tammoja K."/>
            <person name="Tan S.L."/>
            <person name="Tang S."/>
            <person name="Taylor M.S."/>
            <person name="Tegner J."/>
            <person name="Teichmann S.A."/>
            <person name="Ueda H.R."/>
            <person name="van Nimwegen E."/>
            <person name="Verardo R."/>
            <person name="Wei C.L."/>
            <person name="Yagi K."/>
            <person name="Yamanishi H."/>
            <person name="Zabarovsky E."/>
            <person name="Zhu S."/>
            <person name="Zimmer A."/>
            <person name="Hide W."/>
            <person name="Bult C."/>
            <person name="Grimmond S.M."/>
            <person name="Teasdale R.D."/>
            <person name="Liu E.T."/>
            <person name="Brusic V."/>
            <person name="Quackenbush J."/>
            <person name="Wahlestedt C."/>
            <person name="Mattick J.S."/>
            <person name="Hume D.A."/>
            <person name="Kai C."/>
            <person name="Sasaki D."/>
            <person name="Tomaru Y."/>
            <person name="Fukuda S."/>
            <person name="Kanamori-Katayama M."/>
            <person name="Suzuki M."/>
            <person name="Aoki J."/>
            <person name="Arakawa T."/>
            <person name="Iida J."/>
            <person name="Imamura K."/>
            <person name="Itoh M."/>
            <person name="Kato T."/>
            <person name="Kawaji H."/>
            <person name="Kawagashira N."/>
            <person name="Kawashima T."/>
            <person name="Kojima M."/>
            <person name="Kondo S."/>
            <person name="Konno H."/>
            <person name="Nakano K."/>
            <person name="Ninomiya N."/>
            <person name="Nishio T."/>
            <person name="Okada M."/>
            <person name="Plessy C."/>
            <person name="Shibata K."/>
            <person name="Shiraki T."/>
            <person name="Suzuki S."/>
            <person name="Tagami M."/>
            <person name="Waki K."/>
            <person name="Watahiki A."/>
            <person name="Okamura-Oho Y."/>
            <person name="Suzuki H."/>
            <person name="Kawai J."/>
            <person name="Hayashizaki Y."/>
        </authorList>
    </citation>
    <scope>NUCLEOTIDE SEQUENCE [LARGE SCALE MRNA] (ISOFORMS 3 AND 4)</scope>
    <source>
        <strain>C57BL/6J</strain>
        <tissue>Embryo</tissue>
        <tissue>Hypothalamus</tissue>
    </source>
</reference>
<reference key="2">
    <citation type="journal article" date="2009" name="PLoS Biol.">
        <title>Lineage-specific biology revealed by a finished genome assembly of the mouse.</title>
        <authorList>
            <person name="Church D.M."/>
            <person name="Goodstadt L."/>
            <person name="Hillier L.W."/>
            <person name="Zody M.C."/>
            <person name="Goldstein S."/>
            <person name="She X."/>
            <person name="Bult C.J."/>
            <person name="Agarwala R."/>
            <person name="Cherry J.L."/>
            <person name="DiCuccio M."/>
            <person name="Hlavina W."/>
            <person name="Kapustin Y."/>
            <person name="Meric P."/>
            <person name="Maglott D."/>
            <person name="Birtle Z."/>
            <person name="Marques A.C."/>
            <person name="Graves T."/>
            <person name="Zhou S."/>
            <person name="Teague B."/>
            <person name="Potamousis K."/>
            <person name="Churas C."/>
            <person name="Place M."/>
            <person name="Herschleb J."/>
            <person name="Runnheim R."/>
            <person name="Forrest D."/>
            <person name="Amos-Landgraf J."/>
            <person name="Schwartz D.C."/>
            <person name="Cheng Z."/>
            <person name="Lindblad-Toh K."/>
            <person name="Eichler E.E."/>
            <person name="Ponting C.P."/>
        </authorList>
    </citation>
    <scope>NUCLEOTIDE SEQUENCE [LARGE SCALE GENOMIC DNA]</scope>
    <source>
        <strain>C57BL/6J</strain>
    </source>
</reference>
<reference key="3">
    <citation type="journal article" date="2004" name="Genome Res.">
        <title>The status, quality, and expansion of the NIH full-length cDNA project: the Mammalian Gene Collection (MGC).</title>
        <authorList>
            <consortium name="The MGC Project Team"/>
        </authorList>
    </citation>
    <scope>NUCLEOTIDE SEQUENCE [LARGE SCALE MRNA] OF 38-1563 (ISOFORM 2)</scope>
    <source>
        <tissue>Brain</tissue>
    </source>
</reference>
<comment type="function">
    <text evidence="1">May play a role in the control of androgen receptor (AR) protein steady-state levels.</text>
</comment>
<comment type="subunit">
    <text evidence="1">May interact with HSP90AA1, HSP90AB1 and BAG2.</text>
</comment>
<comment type="subcellular location">
    <subcellularLocation>
        <location evidence="1">Cytoplasm</location>
        <location evidence="1">Cytosol</location>
    </subcellularLocation>
</comment>
<comment type="alternative products">
    <event type="alternative splicing"/>
    <isoform>
        <id>A6H603-1</id>
        <name>1</name>
        <sequence type="displayed"/>
    </isoform>
    <isoform>
        <id>A6H603-2</id>
        <name>2</name>
        <sequence type="described" ref="VSP_028945 VSP_028946"/>
    </isoform>
    <isoform>
        <id>A6H603-3</id>
        <name>3</name>
        <sequence type="described" ref="VSP_028942 VSP_028945 VSP_028946"/>
    </isoform>
    <isoform>
        <id>A6H603-4</id>
        <name>4</name>
        <sequence type="described" ref="VSP_028943 VSP_028944"/>
    </isoform>
</comment>
<comment type="sequence caution" evidence="6">
    <conflict type="erroneous initiation">
        <sequence resource="EMBL-CDS" id="AAI45704"/>
    </conflict>
</comment>
<comment type="sequence caution" evidence="6">
    <conflict type="frameshift">
        <sequence resource="EMBL-CDS" id="BAE37101"/>
    </conflict>
</comment>
<gene>
    <name type="primary">Nwd1</name>
</gene>
<sequence length="1563" mass="173270">MDTEREALQCTAYPEVQSFCQRHGLAFEVVDLRWGIPNTQATDYLTTELCLEELERCQKTSIGPAFVALLGDQYGPCPVPRRIEEKEWEALRAQLTSRPRDLELVTRHFQRDDNTIPPTYVLQPSGSLVVPGPEEATLTSVLRGGAQEAWRLGLISQEQWMCYHRSVIEWEIELGLLSSARGDQGATVFLRDVQDLNKHILDDCSLKMVDRLVDGCLDTNAQSLLSGLKGRILDAQPGALKSHHLSWSRDLVNPKNKAHARYLKQLSEQFVARTNHQVLEQLRELELARQELGWLYQEIRHHLWQSTESTKVFCGHQELLAQLRQQLRQDESRTHTPLVLFGPPGIGKTSLMCKLAQQVPELLGHKTVVVLRLLGTSKLSLDARSLLRSLSFQVCLAYGLPLPPAQVLEAHSRVGHFFHTLLHTVSQRNFESLVLLLDSVDDLDSICHSPRVSWLPLKCPPRVHLILSTCSGQQVLHNLQQTLKDPSTYWEVKALSGSQGQEFIQLLLAAEKRMLSPGQRDVLWASLPECGHPGRLRLAFEEARKWASFTVPVPLATTAEEATHQLCIRLEETHGALLVAHVLGYIVSSRYGLSEAELKDVLSLDDEVLQAVYRDWTPPSKELLRFPPLLWVRLRRDLGHCLVRRPVDGCMLLAIAHRQLSQVIQVRYLSGPERAKRHGVLAEFFSGAWSQGIKKLITLPLVGKPLNLDRKVAPQPLWFSSTVANLRKLTELPFHLLHAGRLEELKQEVLGNMSWISCRGISGGIEVLLDDFDMCAPHMNSPEVDLVREAIQLCGPAVELRGLEKSVLYTELLARLLFFAASHPAMIGQLCQQAQSWFRACPYPMLVPLAGFLQPPGGPLRATLTGCHKGITAIAWSLEEKLLVVGTQDGAMVVWDVEEQQVVHVLMGHTAEVKCVRVFAQGTLAISASKDHTLRLWSLLSGQEKVTILDGGSQNPTEPQSWDLHVDERNNVVYSTSGARINMWNLETSKLVFCITGDVSDPWVCVALLAAQGLLLALSKGGQVSLWSSAMGKLQEKHQLSSIKEETPTCAVSIQSRARLVAGFSSGSIALVSAGEDRLLEKLPEAVGFLVVSEDDSLLVAGFGRFVRIFLADSQGFHRFMASDLEHEDMVETAVLGPENNLIITGSRDALIQVWSLSEQGTLLNVLEGVGAPVSLLVRGGTLVVSASRKSSSFKVWDLKSTKKLQSPTPFLDRTGLAAVSHHGSFVYFPKVGDKNKVTIWDLAEGEEQDCLDTSNEVRCLEVAEQAKLLFTGLVSGIVLVFPLNSRQDVLCIPPPEARKAVNCMSLSKSENRLAIAYDNIVLVLDISPGDPCPAIEGPTYTFYTQLPETIVSVAVLADYRVVYGMSDGSLFLYDCACSKVFPLEAHGSRVSCVEVSHSEQLAVSGAEDALLCLWDLQACRGMFEMSYENSCCRGVRCACFSRDDKHVFAGMEDRSVTAWSTVDGTLLAVQFVHAVINRIIPTSNGFMAPTSHGYLIRERFQCPSVRASQQDPLKNFKKAVWLVKTRQREELAAAEASQDAEPVAVEGKESKSNKRSQVCLIL</sequence>